<protein>
    <recommendedName>
        <fullName>Cold shock protein CspSt</fullName>
    </recommendedName>
</protein>
<organism>
    <name type="scientific">Streptococcus thermophilus</name>
    <dbReference type="NCBI Taxonomy" id="1308"/>
    <lineage>
        <taxon>Bacteria</taxon>
        <taxon>Bacillati</taxon>
        <taxon>Bacillota</taxon>
        <taxon>Bacilli</taxon>
        <taxon>Lactobacillales</taxon>
        <taxon>Streptococcaceae</taxon>
        <taxon>Streptococcus</taxon>
    </lineage>
</organism>
<evidence type="ECO:0000250" key="1"/>
<proteinExistence type="evidence at protein level"/>
<reference key="1">
    <citation type="journal article" date="1999" name="Curr. Microbiol.">
        <title>Expression of a new cold shock protein of 21.5 kDa and of the major cold shock protein by Streptococcus thermophilus after cold shock.</title>
        <authorList>
            <person name="Perrin C."/>
            <person name="Guimont C."/>
            <person name="Bracquart P."/>
            <person name="Gaillard J.-L."/>
        </authorList>
    </citation>
    <scope>PROTEIN SEQUENCE</scope>
    <source>
        <strain>PB18</strain>
    </source>
</reference>
<comment type="subcellular location">
    <subcellularLocation>
        <location evidence="1">Cytoplasm</location>
    </subcellularLocation>
</comment>
<comment type="induction">
    <text>By cold shock.</text>
</comment>
<sequence>KNGTVKWFNAEKGFGFITSED</sequence>
<accession>P81622</accession>
<feature type="chain" id="PRO_0000100338" description="Cold shock protein CspSt">
    <location>
        <begin position="1"/>
        <end position="21" status="greater than"/>
    </location>
</feature>
<feature type="domain" description="CSD">
    <location>
        <begin position="1"/>
        <end position="21" status="greater than"/>
    </location>
</feature>
<feature type="non-terminal residue">
    <location>
        <position position="21"/>
    </location>
</feature>
<dbReference type="eggNOG" id="COG1278">
    <property type="taxonomic scope" value="Bacteria"/>
</dbReference>
<dbReference type="GO" id="GO:0005737">
    <property type="term" value="C:cytoplasm"/>
    <property type="evidence" value="ECO:0007669"/>
    <property type="project" value="UniProtKB-SubCell"/>
</dbReference>
<dbReference type="GO" id="GO:0003677">
    <property type="term" value="F:DNA binding"/>
    <property type="evidence" value="ECO:0007669"/>
    <property type="project" value="UniProtKB-KW"/>
</dbReference>
<dbReference type="Gene3D" id="2.40.50.140">
    <property type="entry name" value="Nucleic acid-binding proteins"/>
    <property type="match status" value="1"/>
</dbReference>
<dbReference type="InterPro" id="IPR002059">
    <property type="entry name" value="CSP_DNA-bd"/>
</dbReference>
<dbReference type="InterPro" id="IPR012340">
    <property type="entry name" value="NA-bd_OB-fold"/>
</dbReference>
<dbReference type="Pfam" id="PF00313">
    <property type="entry name" value="CSD"/>
    <property type="match status" value="1"/>
</dbReference>
<dbReference type="SUPFAM" id="SSF50249">
    <property type="entry name" value="Nucleic acid-binding proteins"/>
    <property type="match status" value="1"/>
</dbReference>
<dbReference type="PROSITE" id="PS51857">
    <property type="entry name" value="CSD_2"/>
    <property type="match status" value="1"/>
</dbReference>
<keyword id="KW-0010">Activator</keyword>
<keyword id="KW-0963">Cytoplasm</keyword>
<keyword id="KW-0903">Direct protein sequencing</keyword>
<keyword id="KW-0238">DNA-binding</keyword>
<keyword id="KW-0346">Stress response</keyword>
<keyword id="KW-0804">Transcription</keyword>
<keyword id="KW-0805">Transcription regulation</keyword>
<name>CSPS_STRTR</name>